<evidence type="ECO:0000250" key="1"/>
<evidence type="ECO:0000250" key="2">
    <source>
        <dbReference type="UniProtKB" id="P46108"/>
    </source>
</evidence>
<evidence type="ECO:0000250" key="3">
    <source>
        <dbReference type="UniProtKB" id="Q64010"/>
    </source>
</evidence>
<evidence type="ECO:0000255" key="4">
    <source>
        <dbReference type="PROSITE-ProRule" id="PRU00191"/>
    </source>
</evidence>
<evidence type="ECO:0000255" key="5">
    <source>
        <dbReference type="PROSITE-ProRule" id="PRU00192"/>
    </source>
</evidence>
<evidence type="ECO:0000256" key="6">
    <source>
        <dbReference type="SAM" id="MobiDB-lite"/>
    </source>
</evidence>
<evidence type="ECO:0000269" key="7">
    <source>
    </source>
</evidence>
<evidence type="ECO:0000305" key="8"/>
<evidence type="ECO:0007829" key="9">
    <source>
        <dbReference type="PDB" id="2L3P"/>
    </source>
</evidence>
<evidence type="ECO:0007829" key="10">
    <source>
        <dbReference type="PDB" id="2L3Q"/>
    </source>
</evidence>
<evidence type="ECO:0007829" key="11">
    <source>
        <dbReference type="PDB" id="2L3S"/>
    </source>
</evidence>
<dbReference type="EMBL" id="L08168">
    <property type="protein sequence ID" value="AAA49001.1"/>
    <property type="molecule type" value="mRNA"/>
</dbReference>
<dbReference type="PIR" id="A49011">
    <property type="entry name" value="A49011"/>
</dbReference>
<dbReference type="RefSeq" id="NP_001007847.1">
    <property type="nucleotide sequence ID" value="NM_001007846.1"/>
</dbReference>
<dbReference type="RefSeq" id="NP_001340868.1">
    <property type="nucleotide sequence ID" value="NM_001353939.2"/>
</dbReference>
<dbReference type="RefSeq" id="XP_015151517.1">
    <property type="nucleotide sequence ID" value="XM_015296031.1"/>
</dbReference>
<dbReference type="PDB" id="2L3P">
    <property type="method" value="NMR"/>
    <property type="chains" value="A=220-297"/>
</dbReference>
<dbReference type="PDB" id="2L3Q">
    <property type="method" value="NMR"/>
    <property type="chains" value="A=220-297"/>
</dbReference>
<dbReference type="PDB" id="2L3S">
    <property type="method" value="NMR"/>
    <property type="chains" value="A=135-297"/>
</dbReference>
<dbReference type="PDBsum" id="2L3P"/>
<dbReference type="PDBsum" id="2L3Q"/>
<dbReference type="PDBsum" id="2L3S"/>
<dbReference type="BMRB" id="Q04929"/>
<dbReference type="SMR" id="Q04929"/>
<dbReference type="BioGRID" id="678886">
    <property type="interactions" value="2"/>
</dbReference>
<dbReference type="FunCoup" id="Q04929">
    <property type="interactions" value="2461"/>
</dbReference>
<dbReference type="IntAct" id="Q04929">
    <property type="interactions" value="3"/>
</dbReference>
<dbReference type="MINT" id="Q04929"/>
<dbReference type="STRING" id="9031.ENSGALP00000004174"/>
<dbReference type="iPTMnet" id="Q04929"/>
<dbReference type="PaxDb" id="9031-ENSGALP00000004174"/>
<dbReference type="Ensembl" id="ENSGALT00010070926.1">
    <property type="protein sequence ID" value="ENSGALP00010043617.1"/>
    <property type="gene ID" value="ENSGALG00010029327.1"/>
</dbReference>
<dbReference type="GeneID" id="107054794"/>
<dbReference type="VEuPathDB" id="HostDB:geneid_107054794"/>
<dbReference type="eggNOG" id="KOG4792">
    <property type="taxonomic scope" value="Eukaryota"/>
</dbReference>
<dbReference type="GeneTree" id="ENSGT00820000127055"/>
<dbReference type="HOGENOM" id="CLU_060542_0_1_1"/>
<dbReference type="InParanoid" id="Q04929"/>
<dbReference type="OMA" id="SMTRQEA"/>
<dbReference type="OrthoDB" id="9204160at2759"/>
<dbReference type="PhylomeDB" id="Q04929"/>
<dbReference type="TreeFam" id="TF321436"/>
<dbReference type="Reactome" id="R-GGA-170984">
    <property type="pathway name" value="ARMS-mediated activation"/>
</dbReference>
<dbReference type="Reactome" id="R-GGA-186763">
    <property type="pathway name" value="Downstream signal transduction"/>
</dbReference>
<dbReference type="Reactome" id="R-GGA-2029482">
    <property type="pathway name" value="Regulation of actin dynamics for phagocytic cup formation"/>
</dbReference>
<dbReference type="Reactome" id="R-GGA-372708">
    <property type="pathway name" value="p130Cas linkage to MAPK signaling for integrins"/>
</dbReference>
<dbReference type="Reactome" id="R-GGA-4420097">
    <property type="pathway name" value="VEGFA-VEGFR2 Pathway"/>
</dbReference>
<dbReference type="Reactome" id="R-GGA-8849471">
    <property type="pathway name" value="PTK6 Regulates RHO GTPases, RAS GTPase and MAP kinases"/>
</dbReference>
<dbReference type="Reactome" id="R-GGA-8875555">
    <property type="pathway name" value="MET activates RAP1 and RAC1"/>
</dbReference>
<dbReference type="Reactome" id="R-GGA-8875656">
    <property type="pathway name" value="MET receptor recycling"/>
</dbReference>
<dbReference type="Reactome" id="R-GGA-912631">
    <property type="pathway name" value="Regulation of signaling by CBL"/>
</dbReference>
<dbReference type="EvolutionaryTrace" id="Q04929"/>
<dbReference type="PRO" id="PR:Q04929"/>
<dbReference type="Proteomes" id="UP000000539">
    <property type="component" value="Chromosome 19"/>
</dbReference>
<dbReference type="Bgee" id="ENSGALG00000002656">
    <property type="expression patterns" value="Expressed in lung and 13 other cell types or tissues"/>
</dbReference>
<dbReference type="GO" id="GO:0005737">
    <property type="term" value="C:cytoplasm"/>
    <property type="evidence" value="ECO:0000318"/>
    <property type="project" value="GO_Central"/>
</dbReference>
<dbReference type="GO" id="GO:0016020">
    <property type="term" value="C:membrane"/>
    <property type="evidence" value="ECO:0000250"/>
    <property type="project" value="UniProtKB"/>
</dbReference>
<dbReference type="GO" id="GO:0005886">
    <property type="term" value="C:plasma membrane"/>
    <property type="evidence" value="ECO:0007669"/>
    <property type="project" value="UniProtKB-SubCell"/>
</dbReference>
<dbReference type="GO" id="GO:0032991">
    <property type="term" value="C:protein-containing complex"/>
    <property type="evidence" value="ECO:0007669"/>
    <property type="project" value="Ensembl"/>
</dbReference>
<dbReference type="GO" id="GO:0046875">
    <property type="term" value="F:ephrin receptor binding"/>
    <property type="evidence" value="ECO:0007669"/>
    <property type="project" value="Ensembl"/>
</dbReference>
<dbReference type="GO" id="GO:0001784">
    <property type="term" value="F:phosphotyrosine residue binding"/>
    <property type="evidence" value="ECO:0007669"/>
    <property type="project" value="Ensembl"/>
</dbReference>
<dbReference type="GO" id="GO:0030971">
    <property type="term" value="F:receptor tyrosine kinase binding"/>
    <property type="evidence" value="ECO:0000318"/>
    <property type="project" value="GO_Central"/>
</dbReference>
<dbReference type="GO" id="GO:0042169">
    <property type="term" value="F:SH2 domain binding"/>
    <property type="evidence" value="ECO:0007669"/>
    <property type="project" value="Ensembl"/>
</dbReference>
<dbReference type="GO" id="GO:0017124">
    <property type="term" value="F:SH3 domain binding"/>
    <property type="evidence" value="ECO:0007669"/>
    <property type="project" value="Ensembl"/>
</dbReference>
<dbReference type="GO" id="GO:0035591">
    <property type="term" value="F:signaling adaptor activity"/>
    <property type="evidence" value="ECO:0000318"/>
    <property type="project" value="GO_Central"/>
</dbReference>
<dbReference type="GO" id="GO:0030036">
    <property type="term" value="P:actin cytoskeleton organization"/>
    <property type="evidence" value="ECO:0007669"/>
    <property type="project" value="Ensembl"/>
</dbReference>
<dbReference type="GO" id="GO:0016477">
    <property type="term" value="P:cell migration"/>
    <property type="evidence" value="ECO:0000318"/>
    <property type="project" value="GO_Central"/>
</dbReference>
<dbReference type="GO" id="GO:0007167">
    <property type="term" value="P:enzyme-linked receptor protein signaling pathway"/>
    <property type="evidence" value="ECO:0000318"/>
    <property type="project" value="GO_Central"/>
</dbReference>
<dbReference type="GO" id="GO:0048013">
    <property type="term" value="P:ephrin receptor signaling pathway"/>
    <property type="evidence" value="ECO:0000250"/>
    <property type="project" value="UniProtKB"/>
</dbReference>
<dbReference type="GO" id="GO:2000146">
    <property type="term" value="P:negative regulation of cell motility"/>
    <property type="evidence" value="ECO:0007669"/>
    <property type="project" value="Ensembl"/>
</dbReference>
<dbReference type="GO" id="GO:0061045">
    <property type="term" value="P:negative regulation of wound healing"/>
    <property type="evidence" value="ECO:0007669"/>
    <property type="project" value="Ensembl"/>
</dbReference>
<dbReference type="GO" id="GO:1900026">
    <property type="term" value="P:positive regulation of substrate adhesion-dependent cell spreading"/>
    <property type="evidence" value="ECO:0007669"/>
    <property type="project" value="Ensembl"/>
</dbReference>
<dbReference type="GO" id="GO:0032956">
    <property type="term" value="P:regulation of actin cytoskeleton organization"/>
    <property type="evidence" value="ECO:0000250"/>
    <property type="project" value="UniProtKB"/>
</dbReference>
<dbReference type="GO" id="GO:0008360">
    <property type="term" value="P:regulation of cell shape"/>
    <property type="evidence" value="ECO:0007669"/>
    <property type="project" value="Ensembl"/>
</dbReference>
<dbReference type="GO" id="GO:0043087">
    <property type="term" value="P:regulation of GTPase activity"/>
    <property type="evidence" value="ECO:0000250"/>
    <property type="project" value="UniProtKB"/>
</dbReference>
<dbReference type="GO" id="GO:1902531">
    <property type="term" value="P:regulation of intracellular signal transduction"/>
    <property type="evidence" value="ECO:0007669"/>
    <property type="project" value="Ensembl"/>
</dbReference>
<dbReference type="CDD" id="cd09926">
    <property type="entry name" value="SH2_CRK_like"/>
    <property type="match status" value="1"/>
</dbReference>
<dbReference type="CDD" id="cd11759">
    <property type="entry name" value="SH3_CRK_C"/>
    <property type="match status" value="1"/>
</dbReference>
<dbReference type="CDD" id="cd11758">
    <property type="entry name" value="SH3_CRK_N"/>
    <property type="match status" value="1"/>
</dbReference>
<dbReference type="FunFam" id="2.30.30.40:FF:000065">
    <property type="entry name" value="adapter molecule crk isoform X1"/>
    <property type="match status" value="1"/>
</dbReference>
<dbReference type="FunFam" id="2.30.30.40:FF:000157">
    <property type="entry name" value="adapter molecule crk isoform X1"/>
    <property type="match status" value="1"/>
</dbReference>
<dbReference type="FunFam" id="3.30.505.10:FF:000026">
    <property type="entry name" value="adapter molecule crk isoform X1"/>
    <property type="match status" value="1"/>
</dbReference>
<dbReference type="Gene3D" id="3.30.505.10">
    <property type="entry name" value="SH2 domain"/>
    <property type="match status" value="1"/>
</dbReference>
<dbReference type="Gene3D" id="2.30.30.40">
    <property type="entry name" value="SH3 Domains"/>
    <property type="match status" value="2"/>
</dbReference>
<dbReference type="InterPro" id="IPR035458">
    <property type="entry name" value="CRK_SH3_C"/>
</dbReference>
<dbReference type="InterPro" id="IPR035457">
    <property type="entry name" value="CRK_SH3_N"/>
</dbReference>
<dbReference type="InterPro" id="IPR000980">
    <property type="entry name" value="SH2"/>
</dbReference>
<dbReference type="InterPro" id="IPR036860">
    <property type="entry name" value="SH2_dom_sf"/>
</dbReference>
<dbReference type="InterPro" id="IPR036028">
    <property type="entry name" value="SH3-like_dom_sf"/>
</dbReference>
<dbReference type="InterPro" id="IPR001452">
    <property type="entry name" value="SH3_domain"/>
</dbReference>
<dbReference type="InterPro" id="IPR051184">
    <property type="entry name" value="Tyrosine-phos_adapter"/>
</dbReference>
<dbReference type="PANTHER" id="PTHR19969:SF8">
    <property type="entry name" value="ADAPTER MOLECULE CRK"/>
    <property type="match status" value="1"/>
</dbReference>
<dbReference type="PANTHER" id="PTHR19969">
    <property type="entry name" value="SH2-SH3 ADAPTOR PROTEIN-RELATED"/>
    <property type="match status" value="1"/>
</dbReference>
<dbReference type="Pfam" id="PF00017">
    <property type="entry name" value="SH2"/>
    <property type="match status" value="1"/>
</dbReference>
<dbReference type="Pfam" id="PF00018">
    <property type="entry name" value="SH3_1"/>
    <property type="match status" value="1"/>
</dbReference>
<dbReference type="Pfam" id="PF07653">
    <property type="entry name" value="SH3_2"/>
    <property type="match status" value="1"/>
</dbReference>
<dbReference type="PRINTS" id="PR00401">
    <property type="entry name" value="SH2DOMAIN"/>
</dbReference>
<dbReference type="PRINTS" id="PR00452">
    <property type="entry name" value="SH3DOMAIN"/>
</dbReference>
<dbReference type="SMART" id="SM00252">
    <property type="entry name" value="SH2"/>
    <property type="match status" value="1"/>
</dbReference>
<dbReference type="SMART" id="SM00326">
    <property type="entry name" value="SH3"/>
    <property type="match status" value="2"/>
</dbReference>
<dbReference type="SUPFAM" id="SSF55550">
    <property type="entry name" value="SH2 domain"/>
    <property type="match status" value="1"/>
</dbReference>
<dbReference type="SUPFAM" id="SSF50044">
    <property type="entry name" value="SH3-domain"/>
    <property type="match status" value="2"/>
</dbReference>
<dbReference type="PROSITE" id="PS50001">
    <property type="entry name" value="SH2"/>
    <property type="match status" value="1"/>
</dbReference>
<dbReference type="PROSITE" id="PS50002">
    <property type="entry name" value="SH3"/>
    <property type="match status" value="2"/>
</dbReference>
<keyword id="KW-0002">3D-structure</keyword>
<keyword id="KW-1003">Cell membrane</keyword>
<keyword id="KW-0963">Cytoplasm</keyword>
<keyword id="KW-0472">Membrane</keyword>
<keyword id="KW-0597">Phosphoprotein</keyword>
<keyword id="KW-0656">Proto-oncogene</keyword>
<keyword id="KW-1185">Reference proteome</keyword>
<keyword id="KW-0677">Repeat</keyword>
<keyword id="KW-0727">SH2 domain</keyword>
<keyword id="KW-0728">SH3 domain</keyword>
<gene>
    <name type="primary">CRK</name>
</gene>
<protein>
    <recommendedName>
        <fullName>Adapter molecule crk</fullName>
    </recommendedName>
    <alternativeName>
        <fullName>Proto-oncogene c-Crk</fullName>
    </alternativeName>
    <alternativeName>
        <fullName>p38</fullName>
    </alternativeName>
</protein>
<proteinExistence type="evidence at protein level"/>
<reference key="1">
    <citation type="journal article" date="1992" name="Cell Growth Differ.">
        <title>The product of the cellular crk gene consists primarily of SH2 and SH3 regions.</title>
        <authorList>
            <person name="Reichman C.T."/>
            <person name="Mayer B.J."/>
            <person name="Khawer S."/>
            <person name="Hanafusa H."/>
        </authorList>
    </citation>
    <scope>NUCLEOTIDE SEQUENCE [MRNA]</scope>
</reference>
<reference key="2">
    <citation type="journal article" date="2011" name="Nat. Chem. Biol.">
        <title>Structural basis for regulation of the Crk signaling protein by a proline switch.</title>
        <authorList>
            <person name="Sarkar P."/>
            <person name="Saleh T."/>
            <person name="Tzeng S.R."/>
            <person name="Birge R.B."/>
            <person name="Kalodimos C.G."/>
        </authorList>
    </citation>
    <scope>STRUCTURE BY NMR OF 135-297</scope>
    <scope>ISOMERIZATION AT PRO-238</scope>
</reference>
<name>CRK_CHICK</name>
<feature type="chain" id="PRO_0000079349" description="Adapter molecule crk">
    <location>
        <begin position="1"/>
        <end position="305"/>
    </location>
</feature>
<feature type="domain" description="SH2" evidence="4">
    <location>
        <begin position="13"/>
        <end position="119"/>
    </location>
</feature>
<feature type="domain" description="SH3 1" evidence="5">
    <location>
        <begin position="133"/>
        <end position="193"/>
    </location>
</feature>
<feature type="domain" description="SH3 2" evidence="5">
    <location>
        <begin position="236"/>
        <end position="297"/>
    </location>
</feature>
<feature type="region of interest" description="Disordered" evidence="6">
    <location>
        <begin position="194"/>
        <end position="231"/>
    </location>
</feature>
<feature type="compositionally biased region" description="Polar residues" evidence="6">
    <location>
        <begin position="194"/>
        <end position="211"/>
    </location>
</feature>
<feature type="site" description="Proline switch" evidence="7">
    <location>
        <position position="238"/>
    </location>
</feature>
<feature type="modified residue" description="Phosphotyrosine" evidence="1">
    <location>
        <position position="222"/>
    </location>
</feature>
<feature type="strand" evidence="11">
    <location>
        <begin position="137"/>
        <end position="140"/>
    </location>
</feature>
<feature type="strand" evidence="11">
    <location>
        <begin position="148"/>
        <end position="151"/>
    </location>
</feature>
<feature type="strand" evidence="11">
    <location>
        <begin position="156"/>
        <end position="164"/>
    </location>
</feature>
<feature type="strand" evidence="11">
    <location>
        <begin position="166"/>
        <end position="174"/>
    </location>
</feature>
<feature type="strand" evidence="11">
    <location>
        <begin position="176"/>
        <end position="178"/>
    </location>
</feature>
<feature type="strand" evidence="11">
    <location>
        <begin position="180"/>
        <end position="184"/>
    </location>
</feature>
<feature type="helix" evidence="11">
    <location>
        <begin position="185"/>
        <end position="187"/>
    </location>
</feature>
<feature type="strand" evidence="11">
    <location>
        <begin position="200"/>
        <end position="203"/>
    </location>
</feature>
<feature type="strand" evidence="9">
    <location>
        <begin position="226"/>
        <end position="228"/>
    </location>
</feature>
<feature type="strand" evidence="9">
    <location>
        <begin position="234"/>
        <end position="236"/>
    </location>
</feature>
<feature type="strand" evidence="9">
    <location>
        <begin position="239"/>
        <end position="245"/>
    </location>
</feature>
<feature type="strand" evidence="9">
    <location>
        <begin position="253"/>
        <end position="255"/>
    </location>
</feature>
<feature type="strand" evidence="9">
    <location>
        <begin position="263"/>
        <end position="269"/>
    </location>
</feature>
<feature type="strand" evidence="9">
    <location>
        <begin position="272"/>
        <end position="274"/>
    </location>
</feature>
<feature type="strand" evidence="9">
    <location>
        <begin position="277"/>
        <end position="280"/>
    </location>
</feature>
<feature type="strand" evidence="9">
    <location>
        <begin position="283"/>
        <end position="286"/>
    </location>
</feature>
<feature type="helix" evidence="10">
    <location>
        <begin position="289"/>
        <end position="291"/>
    </location>
</feature>
<feature type="strand" evidence="10">
    <location>
        <begin position="292"/>
        <end position="295"/>
    </location>
</feature>
<comment type="function">
    <text evidence="1 2 3">May mediate attachment-induced MAPK8 activation, membrane ruffling and cell motility in a Rac-dependent manner. Involved in phagocytosis of apoptotic cells and cell motility (By similarity). Involved in cell branching and adhesion (By similarity). May regulate the EFNA5-EPHA3 signaling (By similarity).</text>
</comment>
<comment type="subunit">
    <text evidence="1">Interacts with ABL1, C3G, SOS, MAP4K1, MAPK8 and DOCK1 via its first SH3 domain. Interacts with BCAR1, CBL, PXN and GAB1 via its SH2 domain upon stimulus-induced tyrosine phosphorylation. Interacts with several tyrosine-phosphorylated growth factor receptors such as EGFR, PDGFR and INSR via its SH2 domain (By similarity).</text>
</comment>
<comment type="subcellular location">
    <subcellularLocation>
        <location evidence="1">Cytoplasm</location>
    </subcellularLocation>
    <subcellularLocation>
        <location evidence="1">Cell membrane</location>
    </subcellularLocation>
    <text evidence="1">Translocated to the plasma membrane upon cell adhesion.</text>
</comment>
<comment type="PTM">
    <text evidence="1">Phosphorylated on Tyr-222 upon cell adhesion. Results in the negative regulation of the association with SH2- and SH3-binding partners, possibly by the formation of an intramolecular interaction of phosphorylated Tyr-222 with the SH2 domain. This leads finally to the down-regulation of the Crk signaling pathway (By similarity).</text>
</comment>
<comment type="PTM">
    <text evidence="7">Proline isomerization at Pro-238 by PPIA acts as a switch between two conformations: an autoinhibitory conformation in the cis form, where the tandem SH3 domains interact intramolecularly, and an activated conformation in the trans form.</text>
</comment>
<comment type="similarity">
    <text evidence="8">Belongs to the CRK family.</text>
</comment>
<organism>
    <name type="scientific">Gallus gallus</name>
    <name type="common">Chicken</name>
    <dbReference type="NCBI Taxonomy" id="9031"/>
    <lineage>
        <taxon>Eukaryota</taxon>
        <taxon>Metazoa</taxon>
        <taxon>Chordata</taxon>
        <taxon>Craniata</taxon>
        <taxon>Vertebrata</taxon>
        <taxon>Euteleostomi</taxon>
        <taxon>Archelosauria</taxon>
        <taxon>Archosauria</taxon>
        <taxon>Dinosauria</taxon>
        <taxon>Saurischia</taxon>
        <taxon>Theropoda</taxon>
        <taxon>Coelurosauria</taxon>
        <taxon>Aves</taxon>
        <taxon>Neognathae</taxon>
        <taxon>Galloanserae</taxon>
        <taxon>Galliformes</taxon>
        <taxon>Phasianidae</taxon>
        <taxon>Phasianinae</taxon>
        <taxon>Gallus</taxon>
    </lineage>
</organism>
<accession>Q04929</accession>
<sequence>MAGQFDSEDRGSWYWGRLSRGDAVSLLQGQRHGTFLVRDSGSIPGDFVLSVSESSRVSHYIVNSLGPAGGRRAGGEGPGAPGLNPTRFRIGDQEFDSLPSLLEFYKIHYLDTTTLIEPVSRSRQNSGVILRQEEVEYVRALFDFNGNDDEDLPFKKGDILKIRDKPEEQWWNAEDMDGKRGMIPVPYVEKCRPSSASVSTLTGGNQDSSHPQPLGGPEPGPYAQPSINTPLPNLQNGPFYARVIQKRVPNAYDKTALALEVGELVKVTKINMSGQWEGECNGKRGHFPFTHVRLLDQQNPDEDFS</sequence>